<reference key="1">
    <citation type="journal article" date="1989" name="Neuron">
        <title>A synaptic vesicle membrane protein is conserved from mammals to Drosophila.</title>
        <authorList>
            <person name="Suedhof T.C."/>
            <person name="Baumert M."/>
            <person name="Perin M.S."/>
            <person name="Jahn R."/>
        </authorList>
    </citation>
    <scope>NUCLEOTIDE SEQUENCE [MRNA]</scope>
</reference>
<reference key="2">
    <citation type="journal article" date="1993" name="Nature">
        <title>SNAP receptors implicated in vesicle targeting and fusion.</title>
        <authorList>
            <person name="Soellner T."/>
            <person name="Whiteheart S.W."/>
            <person name="Brunner M."/>
            <person name="Erdjument-Bromage H."/>
            <person name="Geromanos S."/>
            <person name="Tempst P."/>
            <person name="Rothman J.E."/>
        </authorList>
    </citation>
    <scope>PROTEIN SEQUENCE OF 32-60 AND 68-83</scope>
    <scope>ACETYLATION AT SER-2</scope>
</reference>
<reference key="3">
    <citation type="journal article" date="1993" name="FEBS Lett.">
        <title>A complex of rab3A, SNAP-25, VAMP/synaptobrevin-2 and syntaxins in brain presynaptic terminals.</title>
        <authorList>
            <person name="Horikawa H.P."/>
            <person name="Saisu H."/>
            <person name="Ishizuka T."/>
            <person name="Sekine Y."/>
            <person name="Tsugita A."/>
            <person name="Odani S."/>
            <person name="Abe T."/>
        </authorList>
    </citation>
    <scope>PROTEIN SEQUENCE OF 48-79</scope>
    <source>
        <tissue>Brain</tissue>
    </source>
</reference>
<dbReference type="EMBL" id="X76199">
    <property type="protein sequence ID" value="CAA53792.1"/>
    <property type="molecule type" value="mRNA"/>
</dbReference>
<dbReference type="PIR" id="JN0011">
    <property type="entry name" value="JN0011"/>
</dbReference>
<dbReference type="RefSeq" id="NP_776908.1">
    <property type="nucleotide sequence ID" value="NM_174483.2"/>
</dbReference>
<dbReference type="BMRB" id="P63026"/>
<dbReference type="SMR" id="P63026"/>
<dbReference type="CORUM" id="P63026"/>
<dbReference type="FunCoup" id="P63026">
    <property type="interactions" value="1549"/>
</dbReference>
<dbReference type="STRING" id="9913.ENSBTAP00000059351"/>
<dbReference type="iPTMnet" id="P63026"/>
<dbReference type="PaxDb" id="9913-ENSBTAP00000005078"/>
<dbReference type="PeptideAtlas" id="P63026"/>
<dbReference type="GeneID" id="282116"/>
<dbReference type="KEGG" id="bta:282116"/>
<dbReference type="CTD" id="6844"/>
<dbReference type="VEuPathDB" id="HostDB:ENSBTAG00000054934"/>
<dbReference type="eggNOG" id="KOG0860">
    <property type="taxonomic scope" value="Eukaryota"/>
</dbReference>
<dbReference type="HOGENOM" id="CLU_064620_4_0_1"/>
<dbReference type="InParanoid" id="P63026"/>
<dbReference type="OMA" id="TEQFHRS"/>
<dbReference type="OrthoDB" id="10042941at2759"/>
<dbReference type="Reactome" id="R-BTA-181429">
    <property type="pathway name" value="Serotonin Neurotransmitter Release Cycle"/>
</dbReference>
<dbReference type="Reactome" id="R-BTA-181430">
    <property type="pathway name" value="Norepinephrine Neurotransmitter Release Cycle"/>
</dbReference>
<dbReference type="Reactome" id="R-BTA-199992">
    <property type="pathway name" value="trans-Golgi Network Vesicle Budding"/>
</dbReference>
<dbReference type="Reactome" id="R-BTA-210500">
    <property type="pathway name" value="Glutamate Neurotransmitter Release Cycle"/>
</dbReference>
<dbReference type="Reactome" id="R-BTA-212676">
    <property type="pathway name" value="Dopamine Neurotransmitter Release Cycle"/>
</dbReference>
<dbReference type="Reactome" id="R-BTA-264642">
    <property type="pathway name" value="Acetylcholine Neurotransmitter Release Cycle"/>
</dbReference>
<dbReference type="Reactome" id="R-BTA-432720">
    <property type="pathway name" value="Lysosome Vesicle Biogenesis"/>
</dbReference>
<dbReference type="Reactome" id="R-BTA-432722">
    <property type="pathway name" value="Golgi Associated Vesicle Biogenesis"/>
</dbReference>
<dbReference type="Reactome" id="R-BTA-449836">
    <property type="pathway name" value="Other interleukin signaling"/>
</dbReference>
<dbReference type="Reactome" id="R-BTA-8856825">
    <property type="pathway name" value="Cargo recognition for clathrin-mediated endocytosis"/>
</dbReference>
<dbReference type="Reactome" id="R-BTA-8856828">
    <property type="pathway name" value="Clathrin-mediated endocytosis"/>
</dbReference>
<dbReference type="Reactome" id="R-BTA-888590">
    <property type="pathway name" value="GABA synthesis, release, reuptake and degradation"/>
</dbReference>
<dbReference type="Reactome" id="R-BTA-9609523">
    <property type="pathway name" value="Insertion of tail-anchored proteins into the endoplasmic reticulum membrane"/>
</dbReference>
<dbReference type="Proteomes" id="UP000009136">
    <property type="component" value="Chromosome 19"/>
</dbReference>
<dbReference type="GO" id="GO:0005901">
    <property type="term" value="C:caveola"/>
    <property type="evidence" value="ECO:0000314"/>
    <property type="project" value="AgBase"/>
</dbReference>
<dbReference type="GO" id="GO:0005765">
    <property type="term" value="C:lysosomal membrane"/>
    <property type="evidence" value="ECO:0000314"/>
    <property type="project" value="AgBase"/>
</dbReference>
<dbReference type="GO" id="GO:0005886">
    <property type="term" value="C:plasma membrane"/>
    <property type="evidence" value="ECO:0000318"/>
    <property type="project" value="GO_Central"/>
</dbReference>
<dbReference type="GO" id="GO:0031201">
    <property type="term" value="C:SNARE complex"/>
    <property type="evidence" value="ECO:0000314"/>
    <property type="project" value="AgBase"/>
</dbReference>
<dbReference type="GO" id="GO:0030672">
    <property type="term" value="C:synaptic vesicle membrane"/>
    <property type="evidence" value="ECO:0007669"/>
    <property type="project" value="UniProtKB-SubCell"/>
</dbReference>
<dbReference type="GO" id="GO:0031982">
    <property type="term" value="C:vesicle"/>
    <property type="evidence" value="ECO:0000250"/>
    <property type="project" value="UniProtKB"/>
</dbReference>
<dbReference type="GO" id="GO:0005484">
    <property type="term" value="F:SNAP receptor activity"/>
    <property type="evidence" value="ECO:0000318"/>
    <property type="project" value="GO_Central"/>
</dbReference>
<dbReference type="GO" id="GO:0019905">
    <property type="term" value="F:syntaxin binding"/>
    <property type="evidence" value="ECO:0000353"/>
    <property type="project" value="AgBase"/>
</dbReference>
<dbReference type="GO" id="GO:0017075">
    <property type="term" value="F:syntaxin-1 binding"/>
    <property type="evidence" value="ECO:0000318"/>
    <property type="project" value="GO_Central"/>
</dbReference>
<dbReference type="GO" id="GO:0017004">
    <property type="term" value="P:cytochrome complex assembly"/>
    <property type="evidence" value="ECO:0000315"/>
    <property type="project" value="AgBase"/>
</dbReference>
<dbReference type="GO" id="GO:0031580">
    <property type="term" value="P:membrane raft distribution"/>
    <property type="evidence" value="ECO:0000315"/>
    <property type="project" value="AgBase"/>
</dbReference>
<dbReference type="GO" id="GO:1902259">
    <property type="term" value="P:regulation of delayed rectifier potassium channel activity"/>
    <property type="evidence" value="ECO:0000250"/>
    <property type="project" value="UniProtKB"/>
</dbReference>
<dbReference type="GO" id="GO:0007165">
    <property type="term" value="P:signal transduction"/>
    <property type="evidence" value="ECO:0000315"/>
    <property type="project" value="AgBase"/>
</dbReference>
<dbReference type="GO" id="GO:0035493">
    <property type="term" value="P:SNARE complex assembly"/>
    <property type="evidence" value="ECO:0000318"/>
    <property type="project" value="GO_Central"/>
</dbReference>
<dbReference type="GO" id="GO:0048488">
    <property type="term" value="P:synaptic vesicle endocytosis"/>
    <property type="evidence" value="ECO:0000250"/>
    <property type="project" value="UniProtKB"/>
</dbReference>
<dbReference type="GO" id="GO:0016079">
    <property type="term" value="P:synaptic vesicle exocytosis"/>
    <property type="evidence" value="ECO:0000250"/>
    <property type="project" value="UniProtKB"/>
</dbReference>
<dbReference type="GO" id="GO:0042311">
    <property type="term" value="P:vasodilation"/>
    <property type="evidence" value="ECO:0000315"/>
    <property type="project" value="AgBase"/>
</dbReference>
<dbReference type="GO" id="GO:0006906">
    <property type="term" value="P:vesicle fusion"/>
    <property type="evidence" value="ECO:0000315"/>
    <property type="project" value="AgBase"/>
</dbReference>
<dbReference type="CDD" id="cd15870">
    <property type="entry name" value="R-SNARE_VAMP2"/>
    <property type="match status" value="1"/>
</dbReference>
<dbReference type="FunFam" id="1.20.5.110:FF:000013">
    <property type="entry name" value="Vesicle-associated membrane protein 2"/>
    <property type="match status" value="1"/>
</dbReference>
<dbReference type="Gene3D" id="1.20.5.110">
    <property type="match status" value="1"/>
</dbReference>
<dbReference type="InterPro" id="IPR001388">
    <property type="entry name" value="Synaptobrevin-like"/>
</dbReference>
<dbReference type="InterPro" id="IPR016444">
    <property type="entry name" value="Synaptobrevin/VAMP"/>
</dbReference>
<dbReference type="InterPro" id="IPR042855">
    <property type="entry name" value="V_SNARE_CC"/>
</dbReference>
<dbReference type="PANTHER" id="PTHR45701">
    <property type="entry name" value="SYNAPTOBREVIN FAMILY MEMBER"/>
    <property type="match status" value="1"/>
</dbReference>
<dbReference type="Pfam" id="PF00957">
    <property type="entry name" value="Synaptobrevin"/>
    <property type="match status" value="1"/>
</dbReference>
<dbReference type="PIRSF" id="PIRSF005409">
    <property type="entry name" value="Synaptobrevin_euk"/>
    <property type="match status" value="1"/>
</dbReference>
<dbReference type="PRINTS" id="PR00219">
    <property type="entry name" value="SYNAPTOBREVN"/>
</dbReference>
<dbReference type="SUPFAM" id="SSF58038">
    <property type="entry name" value="SNARE fusion complex"/>
    <property type="match status" value="1"/>
</dbReference>
<dbReference type="PROSITE" id="PS00417">
    <property type="entry name" value="SYNAPTOBREVIN"/>
    <property type="match status" value="1"/>
</dbReference>
<dbReference type="PROSITE" id="PS50892">
    <property type="entry name" value="V_SNARE"/>
    <property type="match status" value="1"/>
</dbReference>
<comment type="function">
    <text evidence="1 2 3">Involved in the targeting and/or fusion of transport vesicles to their target membrane (By similarity). Major SNARE protein of synaptic vesicles which mediates fusion of synaptic vesicles to release neurotransmitters. Essential for fast vesicular exocytosis and activity-dependent neurotransmitter release as well as fast endocytosis that mediates rapid reuse of synaptic vesicles (By similarity). Modulates the gating characteristics of the delayed rectifier voltage-dependent potassium channel KCNB1 (By similarity).</text>
</comment>
<comment type="subunit">
    <text evidence="1 2 3">Part of the SNARE core complex containing SNAP25, VAMP2 and STX1A; this complex constitutes the basic catalytic machinery of the complex neurotransmitter release apparatus (By similarity). Recruited to the SNARE complex following binding of the SNARE complex component STX1A to STXBP1 (By similarity). This complex binds to CPLX1. Interacts with POPDC1 and STX4 (By similarity). Interacts with VAPA and VAPB. Interacts with WDFY2, PRKCZ and PRKCI. Forms a complex with WDFY2 and PRKCZ (By similarity). Interacts (via N-terminus) with KCNB1 (via N-terminus and C-terminus); stimulates the channel inactivation rate of KCNB1 (By similarity). Interacts with SEPT8; the interaction inhibits interaction of VAMP2 with SYP. Interacts with SYP; the interaction is inhibited by interaction with SEPT8 (By similarity). Interacts with PICALM. Interacts with alpha-synuclein/SNCA (By similarity). Interacts with STX3 (By similarity).</text>
</comment>
<comment type="subcellular location">
    <subcellularLocation>
        <location evidence="1">Cytoplasmic vesicle</location>
        <location evidence="1">Secretory vesicle</location>
        <location evidence="1">Synaptic vesicle membrane</location>
        <topology evidence="4">Single-pass type IV membrane protein</topology>
    </subcellularLocation>
    <subcellularLocation>
        <location evidence="3">Cell membrane</location>
    </subcellularLocation>
    <text evidence="1">Colocalizes with PRKCZ and WDFY2 in intracellular vesicles.</text>
</comment>
<comment type="PTM">
    <text evidence="1">Phosphorylated by PRKCZ in vitro and this phosphorylation is increased in the presence of WDFY2.</text>
</comment>
<comment type="similarity">
    <text evidence="8">Belongs to the synaptobrevin family.</text>
</comment>
<protein>
    <recommendedName>
        <fullName>Vesicle-associated membrane protein 2</fullName>
        <shortName>VAMP-2</shortName>
    </recommendedName>
    <alternativeName>
        <fullName>Synaptobrevin-2</fullName>
    </alternativeName>
</protein>
<feature type="initiator methionine" description="Removed" evidence="7">
    <location>
        <position position="1"/>
    </location>
</feature>
<feature type="chain" id="PRO_0000206722" description="Vesicle-associated membrane protein 2">
    <location>
        <begin position="2"/>
        <end position="116"/>
    </location>
</feature>
<feature type="topological domain" description="Cytoplasmic" evidence="4">
    <location>
        <begin position="2"/>
        <end position="94"/>
    </location>
</feature>
<feature type="transmembrane region" description="Helical; Anchor for type IV membrane protein" evidence="4">
    <location>
        <begin position="95"/>
        <end position="114"/>
    </location>
</feature>
<feature type="topological domain" description="Vesicular" evidence="4">
    <location>
        <begin position="115"/>
        <end position="116"/>
    </location>
</feature>
<feature type="domain" description="v-SNARE coiled-coil homology" evidence="5">
    <location>
        <begin position="31"/>
        <end position="91"/>
    </location>
</feature>
<feature type="region of interest" description="Disordered" evidence="6">
    <location>
        <begin position="1"/>
        <end position="33"/>
    </location>
</feature>
<feature type="region of interest" description="Required for interaction with SEPT8" evidence="3">
    <location>
        <begin position="92"/>
        <end position="116"/>
    </location>
</feature>
<feature type="modified residue" description="N-acetylserine" evidence="7">
    <location>
        <position position="2"/>
    </location>
</feature>
<keyword id="KW-0007">Acetylation</keyword>
<keyword id="KW-1003">Cell membrane</keyword>
<keyword id="KW-0175">Coiled coil</keyword>
<keyword id="KW-0968">Cytoplasmic vesicle</keyword>
<keyword id="KW-0903">Direct protein sequencing</keyword>
<keyword id="KW-0472">Membrane</keyword>
<keyword id="KW-0597">Phosphoprotein</keyword>
<keyword id="KW-1185">Reference proteome</keyword>
<keyword id="KW-0770">Synapse</keyword>
<keyword id="KW-0812">Transmembrane</keyword>
<keyword id="KW-1133">Transmembrane helix</keyword>
<proteinExistence type="evidence at protein level"/>
<accession>P63026</accession>
<accession>P19065</accession>
<accession>Q9TRF2</accession>
<organism>
    <name type="scientific">Bos taurus</name>
    <name type="common">Bovine</name>
    <dbReference type="NCBI Taxonomy" id="9913"/>
    <lineage>
        <taxon>Eukaryota</taxon>
        <taxon>Metazoa</taxon>
        <taxon>Chordata</taxon>
        <taxon>Craniata</taxon>
        <taxon>Vertebrata</taxon>
        <taxon>Euteleostomi</taxon>
        <taxon>Mammalia</taxon>
        <taxon>Eutheria</taxon>
        <taxon>Laurasiatheria</taxon>
        <taxon>Artiodactyla</taxon>
        <taxon>Ruminantia</taxon>
        <taxon>Pecora</taxon>
        <taxon>Bovidae</taxon>
        <taxon>Bovinae</taxon>
        <taxon>Bos</taxon>
    </lineage>
</organism>
<sequence length="116" mass="12649">MSATAATAPPAAPAGEGGPPAPPPNLTSNRRLQQTQAQVDEVVDIMRVNVDKVLERDQKLSELDDRADALQAGASQFETSAAKLKRKYWWKNLKMMIILGVICAIILIIIIVYFSS</sequence>
<gene>
    <name type="primary">VAMP2</name>
    <name type="synonym">SYB2</name>
</gene>
<evidence type="ECO:0000250" key="1">
    <source>
        <dbReference type="UniProtKB" id="P63027"/>
    </source>
</evidence>
<evidence type="ECO:0000250" key="2">
    <source>
        <dbReference type="UniProtKB" id="P63044"/>
    </source>
</evidence>
<evidence type="ECO:0000250" key="3">
    <source>
        <dbReference type="UniProtKB" id="P63045"/>
    </source>
</evidence>
<evidence type="ECO:0000255" key="4"/>
<evidence type="ECO:0000255" key="5">
    <source>
        <dbReference type="PROSITE-ProRule" id="PRU00290"/>
    </source>
</evidence>
<evidence type="ECO:0000256" key="6">
    <source>
        <dbReference type="SAM" id="MobiDB-lite"/>
    </source>
</evidence>
<evidence type="ECO:0000269" key="7">
    <source>
    </source>
</evidence>
<evidence type="ECO:0000305" key="8"/>
<name>VAMP2_BOVIN</name>